<reference key="1">
    <citation type="journal article" date="2003" name="Proc. Natl. Acad. Sci. U.S.A.">
        <title>The complete genome sequence of Chromobacterium violaceum reveals remarkable and exploitable bacterial adaptability.</title>
        <authorList>
            <person name="Vasconcelos A.T.R."/>
            <person name="de Almeida D.F."/>
            <person name="Hungria M."/>
            <person name="Guimaraes C.T."/>
            <person name="Antonio R.V."/>
            <person name="Almeida F.C."/>
            <person name="de Almeida L.G.P."/>
            <person name="de Almeida R."/>
            <person name="Alves-Gomes J.A."/>
            <person name="Andrade E.M."/>
            <person name="Araripe J."/>
            <person name="de Araujo M.F.F."/>
            <person name="Astolfi-Filho S."/>
            <person name="Azevedo V."/>
            <person name="Baptista A.J."/>
            <person name="Bataus L.A.M."/>
            <person name="Batista J.S."/>
            <person name="Belo A."/>
            <person name="van den Berg C."/>
            <person name="Bogo M."/>
            <person name="Bonatto S."/>
            <person name="Bordignon J."/>
            <person name="Brigido M.M."/>
            <person name="Brito C.A."/>
            <person name="Brocchi M."/>
            <person name="Burity H.A."/>
            <person name="Camargo A.A."/>
            <person name="Cardoso D.D.P."/>
            <person name="Carneiro N.P."/>
            <person name="Carraro D.M."/>
            <person name="Carvalho C.M.B."/>
            <person name="Cascardo J.C.M."/>
            <person name="Cavada B.S."/>
            <person name="Chueire L.M.O."/>
            <person name="Creczynski-Pasa T.B."/>
            <person name="Cunha-Junior N.C."/>
            <person name="Fagundes N."/>
            <person name="Falcao C.L."/>
            <person name="Fantinatti F."/>
            <person name="Farias I.P."/>
            <person name="Felipe M.S.S."/>
            <person name="Ferrari L.P."/>
            <person name="Ferro J.A."/>
            <person name="Ferro M.I.T."/>
            <person name="Franco G.R."/>
            <person name="Freitas N.S.A."/>
            <person name="Furlan L.R."/>
            <person name="Gazzinelli R.T."/>
            <person name="Gomes E.A."/>
            <person name="Goncalves P.R."/>
            <person name="Grangeiro T.B."/>
            <person name="Grattapaglia D."/>
            <person name="Grisard E.C."/>
            <person name="Hanna E.S."/>
            <person name="Jardim S.N."/>
            <person name="Laurino J."/>
            <person name="Leoi L.C.T."/>
            <person name="Lima L.F.A."/>
            <person name="Loureiro M.F."/>
            <person name="Lyra M.C.C.P."/>
            <person name="Madeira H.M.F."/>
            <person name="Manfio G.P."/>
            <person name="Maranhao A.Q."/>
            <person name="Martins W.S."/>
            <person name="di Mauro S.M.Z."/>
            <person name="de Medeiros S.R.B."/>
            <person name="Meissner R.V."/>
            <person name="Moreira M.A.M."/>
            <person name="Nascimento F.F."/>
            <person name="Nicolas M.F."/>
            <person name="Oliveira J.G."/>
            <person name="Oliveira S.C."/>
            <person name="Paixao R.F.C."/>
            <person name="Parente J.A."/>
            <person name="Pedrosa F.O."/>
            <person name="Pena S.D.J."/>
            <person name="Pereira J.O."/>
            <person name="Pereira M."/>
            <person name="Pinto L.S.R.C."/>
            <person name="Pinto L.S."/>
            <person name="Porto J.I.R."/>
            <person name="Potrich D.P."/>
            <person name="Ramalho-Neto C.E."/>
            <person name="Reis A.M.M."/>
            <person name="Rigo L.U."/>
            <person name="Rondinelli E."/>
            <person name="Santos E.B.P."/>
            <person name="Santos F.R."/>
            <person name="Schneider M.P.C."/>
            <person name="Seuanez H.N."/>
            <person name="Silva A.M.R."/>
            <person name="da Silva A.L.C."/>
            <person name="Silva D.W."/>
            <person name="Silva R."/>
            <person name="Simoes I.C."/>
            <person name="Simon D."/>
            <person name="Soares C.M.A."/>
            <person name="Soares R.B.A."/>
            <person name="Souza E.M."/>
            <person name="Souza K.R.L."/>
            <person name="Souza R.C."/>
            <person name="Steffens M.B.R."/>
            <person name="Steindel M."/>
            <person name="Teixeira S.R."/>
            <person name="Urmenyi T."/>
            <person name="Vettore A."/>
            <person name="Wassem R."/>
            <person name="Zaha A."/>
            <person name="Simpson A.J.G."/>
        </authorList>
    </citation>
    <scope>NUCLEOTIDE SEQUENCE [LARGE SCALE GENOMIC DNA]</scope>
    <source>
        <strain>ATCC 12472 / DSM 30191 / JCM 1249 / CCUG 213 / NBRC 12614 / NCIMB 9131 / NCTC 9757 / MK</strain>
    </source>
</reference>
<keyword id="KW-0067">ATP-binding</keyword>
<keyword id="KW-0963">Cytoplasm</keyword>
<keyword id="KW-0324">Glycolysis</keyword>
<keyword id="KW-0418">Kinase</keyword>
<keyword id="KW-0547">Nucleotide-binding</keyword>
<keyword id="KW-1185">Reference proteome</keyword>
<keyword id="KW-0808">Transferase</keyword>
<organism>
    <name type="scientific">Chromobacterium violaceum (strain ATCC 12472 / DSM 30191 / JCM 1249 / CCUG 213 / NBRC 12614 / NCIMB 9131 / NCTC 9757 / MK)</name>
    <dbReference type="NCBI Taxonomy" id="243365"/>
    <lineage>
        <taxon>Bacteria</taxon>
        <taxon>Pseudomonadati</taxon>
        <taxon>Pseudomonadota</taxon>
        <taxon>Betaproteobacteria</taxon>
        <taxon>Neisseriales</taxon>
        <taxon>Chromobacteriaceae</taxon>
        <taxon>Chromobacterium</taxon>
    </lineage>
</organism>
<dbReference type="EC" id="2.7.2.3" evidence="1"/>
<dbReference type="EMBL" id="AE016825">
    <property type="protein sequence ID" value="AAQ57868.1"/>
    <property type="molecule type" value="Genomic_DNA"/>
</dbReference>
<dbReference type="RefSeq" id="WP_011133744.1">
    <property type="nucleotide sequence ID" value="NC_005085.1"/>
</dbReference>
<dbReference type="SMR" id="Q7P1M4"/>
<dbReference type="STRING" id="243365.CV_0189"/>
<dbReference type="KEGG" id="cvi:CV_0189"/>
<dbReference type="eggNOG" id="COG0126">
    <property type="taxonomic scope" value="Bacteria"/>
</dbReference>
<dbReference type="HOGENOM" id="CLU_025427_0_2_4"/>
<dbReference type="OrthoDB" id="9808460at2"/>
<dbReference type="UniPathway" id="UPA00109">
    <property type="reaction ID" value="UER00185"/>
</dbReference>
<dbReference type="Proteomes" id="UP000001424">
    <property type="component" value="Chromosome"/>
</dbReference>
<dbReference type="GO" id="GO:0005829">
    <property type="term" value="C:cytosol"/>
    <property type="evidence" value="ECO:0007669"/>
    <property type="project" value="TreeGrafter"/>
</dbReference>
<dbReference type="GO" id="GO:0043531">
    <property type="term" value="F:ADP binding"/>
    <property type="evidence" value="ECO:0007669"/>
    <property type="project" value="TreeGrafter"/>
</dbReference>
<dbReference type="GO" id="GO:0005524">
    <property type="term" value="F:ATP binding"/>
    <property type="evidence" value="ECO:0007669"/>
    <property type="project" value="UniProtKB-KW"/>
</dbReference>
<dbReference type="GO" id="GO:0004618">
    <property type="term" value="F:phosphoglycerate kinase activity"/>
    <property type="evidence" value="ECO:0007669"/>
    <property type="project" value="UniProtKB-UniRule"/>
</dbReference>
<dbReference type="GO" id="GO:0006094">
    <property type="term" value="P:gluconeogenesis"/>
    <property type="evidence" value="ECO:0007669"/>
    <property type="project" value="TreeGrafter"/>
</dbReference>
<dbReference type="GO" id="GO:0006096">
    <property type="term" value="P:glycolytic process"/>
    <property type="evidence" value="ECO:0007669"/>
    <property type="project" value="UniProtKB-UniRule"/>
</dbReference>
<dbReference type="FunFam" id="3.40.50.1260:FF:000001">
    <property type="entry name" value="Phosphoglycerate kinase"/>
    <property type="match status" value="1"/>
</dbReference>
<dbReference type="FunFam" id="3.40.50.1260:FF:000002">
    <property type="entry name" value="Phosphoglycerate kinase"/>
    <property type="match status" value="1"/>
</dbReference>
<dbReference type="Gene3D" id="3.40.50.1260">
    <property type="entry name" value="Phosphoglycerate kinase, N-terminal domain"/>
    <property type="match status" value="2"/>
</dbReference>
<dbReference type="HAMAP" id="MF_00145">
    <property type="entry name" value="Phosphoglyc_kinase"/>
    <property type="match status" value="1"/>
</dbReference>
<dbReference type="InterPro" id="IPR001576">
    <property type="entry name" value="Phosphoglycerate_kinase"/>
</dbReference>
<dbReference type="InterPro" id="IPR015824">
    <property type="entry name" value="Phosphoglycerate_kinase_N"/>
</dbReference>
<dbReference type="InterPro" id="IPR036043">
    <property type="entry name" value="Phosphoglycerate_kinase_sf"/>
</dbReference>
<dbReference type="PANTHER" id="PTHR11406">
    <property type="entry name" value="PHOSPHOGLYCERATE KINASE"/>
    <property type="match status" value="1"/>
</dbReference>
<dbReference type="PANTHER" id="PTHR11406:SF23">
    <property type="entry name" value="PHOSPHOGLYCERATE KINASE 1, CHLOROPLASTIC-RELATED"/>
    <property type="match status" value="1"/>
</dbReference>
<dbReference type="Pfam" id="PF00162">
    <property type="entry name" value="PGK"/>
    <property type="match status" value="1"/>
</dbReference>
<dbReference type="PIRSF" id="PIRSF000724">
    <property type="entry name" value="Pgk"/>
    <property type="match status" value="1"/>
</dbReference>
<dbReference type="PRINTS" id="PR00477">
    <property type="entry name" value="PHGLYCKINASE"/>
</dbReference>
<dbReference type="SUPFAM" id="SSF53748">
    <property type="entry name" value="Phosphoglycerate kinase"/>
    <property type="match status" value="1"/>
</dbReference>
<sequence length="391" mass="40619">MKFNKLSEQNLSGKRALIRVDMNVPLKNGVIGDDTRIRASLPTIEHCLKAGAAVLLMTHLGRPTEGEPKPEDSLAPVVARLSELLGKPVRLIADFHAGVELAPGEVAMLENVRLNKGEKKNNDELGRAYAALCDVFVHDAFGTAHRAEASTHAVAKFAPVACAGLLLSAELDALGKALQAPARPLVAIVAGSKVSTKLTILEALADKVDQLIVGGGIANTFLLAEGKAIGKSLAEADLVEDARRVIAKIRARGGDVPLPADVVCAKEFAETAAAATKNVAEVVADDMILDIGPDAAKQLAAIIAQAGTVVWNGPVGVFEFDQFGNGTKTLAQAIAQSKAFSIAGGGDTLAAIAKYGITDDISYISTGGGAFLEFLEGKELPAVAILAERAQ</sequence>
<name>PGK_CHRVO</name>
<comment type="catalytic activity">
    <reaction evidence="1">
        <text>(2R)-3-phosphoglycerate + ATP = (2R)-3-phospho-glyceroyl phosphate + ADP</text>
        <dbReference type="Rhea" id="RHEA:14801"/>
        <dbReference type="ChEBI" id="CHEBI:30616"/>
        <dbReference type="ChEBI" id="CHEBI:57604"/>
        <dbReference type="ChEBI" id="CHEBI:58272"/>
        <dbReference type="ChEBI" id="CHEBI:456216"/>
        <dbReference type="EC" id="2.7.2.3"/>
    </reaction>
</comment>
<comment type="pathway">
    <text evidence="1">Carbohydrate degradation; glycolysis; pyruvate from D-glyceraldehyde 3-phosphate: step 2/5.</text>
</comment>
<comment type="subunit">
    <text evidence="1">Monomer.</text>
</comment>
<comment type="subcellular location">
    <subcellularLocation>
        <location evidence="1">Cytoplasm</location>
    </subcellularLocation>
</comment>
<comment type="similarity">
    <text evidence="1">Belongs to the phosphoglycerate kinase family.</text>
</comment>
<evidence type="ECO:0000255" key="1">
    <source>
        <dbReference type="HAMAP-Rule" id="MF_00145"/>
    </source>
</evidence>
<proteinExistence type="inferred from homology"/>
<protein>
    <recommendedName>
        <fullName evidence="1">Phosphoglycerate kinase</fullName>
        <ecNumber evidence="1">2.7.2.3</ecNumber>
    </recommendedName>
</protein>
<feature type="chain" id="PRO_0000145930" description="Phosphoglycerate kinase">
    <location>
        <begin position="1"/>
        <end position="391"/>
    </location>
</feature>
<feature type="binding site" evidence="1">
    <location>
        <begin position="21"/>
        <end position="23"/>
    </location>
    <ligand>
        <name>substrate</name>
    </ligand>
</feature>
<feature type="binding site" evidence="1">
    <location>
        <position position="36"/>
    </location>
    <ligand>
        <name>substrate</name>
    </ligand>
</feature>
<feature type="binding site" evidence="1">
    <location>
        <begin position="59"/>
        <end position="62"/>
    </location>
    <ligand>
        <name>substrate</name>
    </ligand>
</feature>
<feature type="binding site" evidence="1">
    <location>
        <position position="113"/>
    </location>
    <ligand>
        <name>substrate</name>
    </ligand>
</feature>
<feature type="binding site" evidence="1">
    <location>
        <position position="146"/>
    </location>
    <ligand>
        <name>substrate</name>
    </ligand>
</feature>
<feature type="binding site" evidence="1">
    <location>
        <position position="197"/>
    </location>
    <ligand>
        <name>ATP</name>
        <dbReference type="ChEBI" id="CHEBI:30616"/>
    </ligand>
</feature>
<feature type="binding site" evidence="1">
    <location>
        <position position="319"/>
    </location>
    <ligand>
        <name>ATP</name>
        <dbReference type="ChEBI" id="CHEBI:30616"/>
    </ligand>
</feature>
<feature type="binding site" evidence="1">
    <location>
        <begin position="345"/>
        <end position="348"/>
    </location>
    <ligand>
        <name>ATP</name>
        <dbReference type="ChEBI" id="CHEBI:30616"/>
    </ligand>
</feature>
<gene>
    <name evidence="1" type="primary">pgk</name>
    <name type="ordered locus">CV_0189</name>
</gene>
<accession>Q7P1M4</accession>